<accession>Q5X6J0</accession>
<protein>
    <recommendedName>
        <fullName evidence="1">Ribosomal RNA small subunit methyltransferase H</fullName>
        <ecNumber evidence="1">2.1.1.199</ecNumber>
    </recommendedName>
    <alternativeName>
        <fullName evidence="1">16S rRNA m(4)C1402 methyltransferase</fullName>
    </alternativeName>
    <alternativeName>
        <fullName evidence="1">rRNA (cytosine-N(4)-)-methyltransferase RsmH</fullName>
    </alternativeName>
</protein>
<sequence length="308" mass="34461">MAKHQSVLLHESIKGLAIKADGIYFDGTFGRGGHSREILNHLSDKGRLFAIDKDLDAVQYAKDYFGLDKRFQIFHGSFAQIKEFASQAGVIGAVDGILLDLGVSSPQLDNPERGFSFMLQGPLDMRMDLTQSINAANFVNEAEVNELAHVFRAYGEERFAGRIAKAIVDARKLKPITTTLELAEIVKEANPKWEKHKHPATRVFQAIRIHVNQELTDLSNCLEQCLDVLGPGGRLAVISFHSLEDRIVKQFMRDKEQGNRPPVEVPIKYEELKTNFKKVGKAVKPQSSEIKENVRSRSAVLRIGEKLA</sequence>
<evidence type="ECO:0000255" key="1">
    <source>
        <dbReference type="HAMAP-Rule" id="MF_01007"/>
    </source>
</evidence>
<name>RSMH_LEGPA</name>
<reference key="1">
    <citation type="journal article" date="2004" name="Nat. Genet.">
        <title>Evidence in the Legionella pneumophila genome for exploitation of host cell functions and high genome plasticity.</title>
        <authorList>
            <person name="Cazalet C."/>
            <person name="Rusniok C."/>
            <person name="Brueggemann H."/>
            <person name="Zidane N."/>
            <person name="Magnier A."/>
            <person name="Ma L."/>
            <person name="Tichit M."/>
            <person name="Jarraud S."/>
            <person name="Bouchier C."/>
            <person name="Vandenesch F."/>
            <person name="Kunst F."/>
            <person name="Etienne J."/>
            <person name="Glaser P."/>
            <person name="Buchrieser C."/>
        </authorList>
    </citation>
    <scope>NUCLEOTIDE SEQUENCE [LARGE SCALE GENOMIC DNA]</scope>
    <source>
        <strain>Paris</strain>
    </source>
</reference>
<gene>
    <name evidence="1" type="primary">rsmH</name>
    <name type="synonym">mraW</name>
    <name type="ordered locus">lpp0975</name>
</gene>
<dbReference type="EC" id="2.1.1.199" evidence="1"/>
<dbReference type="EMBL" id="CR628336">
    <property type="protein sequence ID" value="CAH12126.1"/>
    <property type="molecule type" value="Genomic_DNA"/>
</dbReference>
<dbReference type="RefSeq" id="WP_011213344.1">
    <property type="nucleotide sequence ID" value="NC_006368.1"/>
</dbReference>
<dbReference type="SMR" id="Q5X6J0"/>
<dbReference type="GeneID" id="57034902"/>
<dbReference type="KEGG" id="lpp:lpp0975"/>
<dbReference type="LegioList" id="lpp0975"/>
<dbReference type="HOGENOM" id="CLU_038422_2_0_6"/>
<dbReference type="GO" id="GO:0005737">
    <property type="term" value="C:cytoplasm"/>
    <property type="evidence" value="ECO:0007669"/>
    <property type="project" value="UniProtKB-SubCell"/>
</dbReference>
<dbReference type="GO" id="GO:0071424">
    <property type="term" value="F:rRNA (cytosine-N4-)-methyltransferase activity"/>
    <property type="evidence" value="ECO:0007669"/>
    <property type="project" value="UniProtKB-UniRule"/>
</dbReference>
<dbReference type="GO" id="GO:0070475">
    <property type="term" value="P:rRNA base methylation"/>
    <property type="evidence" value="ECO:0007669"/>
    <property type="project" value="UniProtKB-UniRule"/>
</dbReference>
<dbReference type="FunFam" id="1.10.150.170:FF:000001">
    <property type="entry name" value="Ribosomal RNA small subunit methyltransferase H"/>
    <property type="match status" value="1"/>
</dbReference>
<dbReference type="Gene3D" id="1.10.150.170">
    <property type="entry name" value="Putative methyltransferase TM0872, insert domain"/>
    <property type="match status" value="1"/>
</dbReference>
<dbReference type="Gene3D" id="3.40.50.150">
    <property type="entry name" value="Vaccinia Virus protein VP39"/>
    <property type="match status" value="1"/>
</dbReference>
<dbReference type="HAMAP" id="MF_01007">
    <property type="entry name" value="16SrRNA_methyltr_H"/>
    <property type="match status" value="1"/>
</dbReference>
<dbReference type="InterPro" id="IPR002903">
    <property type="entry name" value="RsmH"/>
</dbReference>
<dbReference type="InterPro" id="IPR023397">
    <property type="entry name" value="SAM-dep_MeTrfase_MraW_recog"/>
</dbReference>
<dbReference type="InterPro" id="IPR029063">
    <property type="entry name" value="SAM-dependent_MTases_sf"/>
</dbReference>
<dbReference type="NCBIfam" id="TIGR00006">
    <property type="entry name" value="16S rRNA (cytosine(1402)-N(4))-methyltransferase RsmH"/>
    <property type="match status" value="1"/>
</dbReference>
<dbReference type="PANTHER" id="PTHR11265:SF0">
    <property type="entry name" value="12S RRNA N4-METHYLCYTIDINE METHYLTRANSFERASE"/>
    <property type="match status" value="1"/>
</dbReference>
<dbReference type="PANTHER" id="PTHR11265">
    <property type="entry name" value="S-ADENOSYL-METHYLTRANSFERASE MRAW"/>
    <property type="match status" value="1"/>
</dbReference>
<dbReference type="Pfam" id="PF01795">
    <property type="entry name" value="Methyltransf_5"/>
    <property type="match status" value="1"/>
</dbReference>
<dbReference type="PIRSF" id="PIRSF004486">
    <property type="entry name" value="MraW"/>
    <property type="match status" value="1"/>
</dbReference>
<dbReference type="SUPFAM" id="SSF81799">
    <property type="entry name" value="Putative methyltransferase TM0872, insert domain"/>
    <property type="match status" value="1"/>
</dbReference>
<dbReference type="SUPFAM" id="SSF53335">
    <property type="entry name" value="S-adenosyl-L-methionine-dependent methyltransferases"/>
    <property type="match status" value="1"/>
</dbReference>
<keyword id="KW-0963">Cytoplasm</keyword>
<keyword id="KW-0489">Methyltransferase</keyword>
<keyword id="KW-0698">rRNA processing</keyword>
<keyword id="KW-0949">S-adenosyl-L-methionine</keyword>
<keyword id="KW-0808">Transferase</keyword>
<organism>
    <name type="scientific">Legionella pneumophila (strain Paris)</name>
    <dbReference type="NCBI Taxonomy" id="297246"/>
    <lineage>
        <taxon>Bacteria</taxon>
        <taxon>Pseudomonadati</taxon>
        <taxon>Pseudomonadota</taxon>
        <taxon>Gammaproteobacteria</taxon>
        <taxon>Legionellales</taxon>
        <taxon>Legionellaceae</taxon>
        <taxon>Legionella</taxon>
    </lineage>
</organism>
<proteinExistence type="inferred from homology"/>
<feature type="chain" id="PRO_0000108645" description="Ribosomal RNA small subunit methyltransferase H">
    <location>
        <begin position="1"/>
        <end position="308"/>
    </location>
</feature>
<feature type="binding site" evidence="1">
    <location>
        <begin position="32"/>
        <end position="34"/>
    </location>
    <ligand>
        <name>S-adenosyl-L-methionine</name>
        <dbReference type="ChEBI" id="CHEBI:59789"/>
    </ligand>
</feature>
<feature type="binding site" evidence="1">
    <location>
        <position position="52"/>
    </location>
    <ligand>
        <name>S-adenosyl-L-methionine</name>
        <dbReference type="ChEBI" id="CHEBI:59789"/>
    </ligand>
</feature>
<feature type="binding site" evidence="1">
    <location>
        <position position="78"/>
    </location>
    <ligand>
        <name>S-adenosyl-L-methionine</name>
        <dbReference type="ChEBI" id="CHEBI:59789"/>
    </ligand>
</feature>
<feature type="binding site" evidence="1">
    <location>
        <position position="100"/>
    </location>
    <ligand>
        <name>S-adenosyl-L-methionine</name>
        <dbReference type="ChEBI" id="CHEBI:59789"/>
    </ligand>
</feature>
<feature type="binding site" evidence="1">
    <location>
        <position position="107"/>
    </location>
    <ligand>
        <name>S-adenosyl-L-methionine</name>
        <dbReference type="ChEBI" id="CHEBI:59789"/>
    </ligand>
</feature>
<comment type="function">
    <text evidence="1">Specifically methylates the N4 position of cytidine in position 1402 (C1402) of 16S rRNA.</text>
</comment>
<comment type="catalytic activity">
    <reaction evidence="1">
        <text>cytidine(1402) in 16S rRNA + S-adenosyl-L-methionine = N(4)-methylcytidine(1402) in 16S rRNA + S-adenosyl-L-homocysteine + H(+)</text>
        <dbReference type="Rhea" id="RHEA:42928"/>
        <dbReference type="Rhea" id="RHEA-COMP:10286"/>
        <dbReference type="Rhea" id="RHEA-COMP:10287"/>
        <dbReference type="ChEBI" id="CHEBI:15378"/>
        <dbReference type="ChEBI" id="CHEBI:57856"/>
        <dbReference type="ChEBI" id="CHEBI:59789"/>
        <dbReference type="ChEBI" id="CHEBI:74506"/>
        <dbReference type="ChEBI" id="CHEBI:82748"/>
        <dbReference type="EC" id="2.1.1.199"/>
    </reaction>
</comment>
<comment type="subcellular location">
    <subcellularLocation>
        <location evidence="1">Cytoplasm</location>
    </subcellularLocation>
</comment>
<comment type="similarity">
    <text evidence="1">Belongs to the methyltransferase superfamily. RsmH family.</text>
</comment>